<evidence type="ECO:0000255" key="1">
    <source>
        <dbReference type="HAMAP-Rule" id="MF_00646"/>
    </source>
</evidence>
<gene>
    <name type="ordered locus">YE1441</name>
</gene>
<reference key="1">
    <citation type="journal article" date="2006" name="PLoS Genet.">
        <title>The complete genome sequence and comparative genome analysis of the high pathogenicity Yersinia enterocolitica strain 8081.</title>
        <authorList>
            <person name="Thomson N.R."/>
            <person name="Howard S."/>
            <person name="Wren B.W."/>
            <person name="Holden M.T.G."/>
            <person name="Crossman L."/>
            <person name="Challis G.L."/>
            <person name="Churcher C."/>
            <person name="Mungall K."/>
            <person name="Brooks K."/>
            <person name="Chillingworth T."/>
            <person name="Feltwell T."/>
            <person name="Abdellah Z."/>
            <person name="Hauser H."/>
            <person name="Jagels K."/>
            <person name="Maddison M."/>
            <person name="Moule S."/>
            <person name="Sanders M."/>
            <person name="Whitehead S."/>
            <person name="Quail M.A."/>
            <person name="Dougan G."/>
            <person name="Parkhill J."/>
            <person name="Prentice M.B."/>
        </authorList>
    </citation>
    <scope>NUCLEOTIDE SEQUENCE [LARGE SCALE GENOMIC DNA]</scope>
    <source>
        <strain>NCTC 13174 / 8081</strain>
    </source>
</reference>
<name>EFPL_YERE8</name>
<sequence length="190" mass="21326">MARANEIKRGMAVNLNGKLLLVKDIDVQSPSARGASTLYKMRFSDVRTGLKVEERFKGDEILDTITLTRRSVNFSYIDGDEYVFMDDEDFTPYNFKKEQIEEELLFIPEGGMPGMQVLTMDGQLLALELPQTVDMEIVETAPSIKGASASARNKPAVMSTGLSIQVPEYISPGEKIRIHIVERRYMGRAD</sequence>
<feature type="chain" id="PRO_1000056949" description="Elongation factor P-like protein">
    <location>
        <begin position="1"/>
        <end position="190"/>
    </location>
</feature>
<dbReference type="EMBL" id="AM286415">
    <property type="protein sequence ID" value="CAL11531.1"/>
    <property type="molecule type" value="Genomic_DNA"/>
</dbReference>
<dbReference type="RefSeq" id="YP_001005749.1">
    <property type="nucleotide sequence ID" value="NC_008800.1"/>
</dbReference>
<dbReference type="SMR" id="A1JLS4"/>
<dbReference type="KEGG" id="yen:YE1441"/>
<dbReference type="PATRIC" id="fig|393305.7.peg.1567"/>
<dbReference type="eggNOG" id="COG0231">
    <property type="taxonomic scope" value="Bacteria"/>
</dbReference>
<dbReference type="HOGENOM" id="CLU_074944_2_0_6"/>
<dbReference type="OrthoDB" id="5599402at2"/>
<dbReference type="Proteomes" id="UP000000642">
    <property type="component" value="Chromosome"/>
</dbReference>
<dbReference type="GO" id="GO:0005737">
    <property type="term" value="C:cytoplasm"/>
    <property type="evidence" value="ECO:0007669"/>
    <property type="project" value="InterPro"/>
</dbReference>
<dbReference type="GO" id="GO:0003746">
    <property type="term" value="F:translation elongation factor activity"/>
    <property type="evidence" value="ECO:0007669"/>
    <property type="project" value="UniProtKB-UniRule"/>
</dbReference>
<dbReference type="GO" id="GO:0043043">
    <property type="term" value="P:peptide biosynthetic process"/>
    <property type="evidence" value="ECO:0007669"/>
    <property type="project" value="InterPro"/>
</dbReference>
<dbReference type="CDD" id="cd04470">
    <property type="entry name" value="S1_EF-P_repeat_1"/>
    <property type="match status" value="1"/>
</dbReference>
<dbReference type="CDD" id="cd05794">
    <property type="entry name" value="S1_EF-P_repeat_2"/>
    <property type="match status" value="1"/>
</dbReference>
<dbReference type="FunFam" id="2.40.50.140:FF:000004">
    <property type="entry name" value="Elongation factor P"/>
    <property type="match status" value="1"/>
</dbReference>
<dbReference type="FunFam" id="2.30.30.30:FF:000011">
    <property type="entry name" value="Elongation factor P-like protein"/>
    <property type="match status" value="1"/>
</dbReference>
<dbReference type="FunFam" id="2.40.50.140:FF:000053">
    <property type="entry name" value="Elongation factor P-like protein"/>
    <property type="match status" value="1"/>
</dbReference>
<dbReference type="Gene3D" id="2.30.30.30">
    <property type="match status" value="1"/>
</dbReference>
<dbReference type="Gene3D" id="2.40.50.140">
    <property type="entry name" value="Nucleic acid-binding proteins"/>
    <property type="match status" value="2"/>
</dbReference>
<dbReference type="HAMAP" id="MF_00646">
    <property type="entry name" value="EFP"/>
    <property type="match status" value="1"/>
</dbReference>
<dbReference type="InterPro" id="IPR015365">
    <property type="entry name" value="Elong-fact-P_C"/>
</dbReference>
<dbReference type="InterPro" id="IPR012340">
    <property type="entry name" value="NA-bd_OB-fold"/>
</dbReference>
<dbReference type="InterPro" id="IPR014722">
    <property type="entry name" value="Rib_uL2_dom2"/>
</dbReference>
<dbReference type="InterPro" id="IPR020599">
    <property type="entry name" value="Transl_elong_fac_P/YeiP"/>
</dbReference>
<dbReference type="InterPro" id="IPR013185">
    <property type="entry name" value="Transl_elong_KOW-like"/>
</dbReference>
<dbReference type="InterPro" id="IPR011897">
    <property type="entry name" value="Transl_elong_p-like_YeiP"/>
</dbReference>
<dbReference type="InterPro" id="IPR001059">
    <property type="entry name" value="Transl_elong_P/YeiP_cen"/>
</dbReference>
<dbReference type="InterPro" id="IPR013852">
    <property type="entry name" value="Transl_elong_P/YeiP_CS"/>
</dbReference>
<dbReference type="InterPro" id="IPR008991">
    <property type="entry name" value="Translation_prot_SH3-like_sf"/>
</dbReference>
<dbReference type="NCBIfam" id="NF001810">
    <property type="entry name" value="PRK00529.1"/>
    <property type="match status" value="1"/>
</dbReference>
<dbReference type="NCBIfam" id="NF003392">
    <property type="entry name" value="PRK04542.1"/>
    <property type="match status" value="1"/>
</dbReference>
<dbReference type="NCBIfam" id="TIGR02178">
    <property type="entry name" value="yeiP"/>
    <property type="match status" value="1"/>
</dbReference>
<dbReference type="PANTHER" id="PTHR30053">
    <property type="entry name" value="ELONGATION FACTOR P"/>
    <property type="match status" value="1"/>
</dbReference>
<dbReference type="PANTHER" id="PTHR30053:SF14">
    <property type="entry name" value="TRANSLATION ELONGATION FACTOR KOW-LIKE DOMAIN-CONTAINING PROTEIN"/>
    <property type="match status" value="1"/>
</dbReference>
<dbReference type="Pfam" id="PF01132">
    <property type="entry name" value="EFP"/>
    <property type="match status" value="1"/>
</dbReference>
<dbReference type="Pfam" id="PF08207">
    <property type="entry name" value="EFP_N"/>
    <property type="match status" value="1"/>
</dbReference>
<dbReference type="Pfam" id="PF09285">
    <property type="entry name" value="Elong-fact-P_C"/>
    <property type="match status" value="1"/>
</dbReference>
<dbReference type="PIRSF" id="PIRSF005901">
    <property type="entry name" value="EF-P"/>
    <property type="match status" value="1"/>
</dbReference>
<dbReference type="SMART" id="SM01185">
    <property type="entry name" value="EFP"/>
    <property type="match status" value="1"/>
</dbReference>
<dbReference type="SMART" id="SM00841">
    <property type="entry name" value="Elong-fact-P_C"/>
    <property type="match status" value="1"/>
</dbReference>
<dbReference type="SUPFAM" id="SSF50249">
    <property type="entry name" value="Nucleic acid-binding proteins"/>
    <property type="match status" value="2"/>
</dbReference>
<dbReference type="SUPFAM" id="SSF50104">
    <property type="entry name" value="Translation proteins SH3-like domain"/>
    <property type="match status" value="1"/>
</dbReference>
<dbReference type="PROSITE" id="PS01275">
    <property type="entry name" value="EFP"/>
    <property type="match status" value="1"/>
</dbReference>
<comment type="similarity">
    <text evidence="1">Belongs to the elongation factor P family.</text>
</comment>
<organism>
    <name type="scientific">Yersinia enterocolitica serotype O:8 / biotype 1B (strain NCTC 13174 / 8081)</name>
    <dbReference type="NCBI Taxonomy" id="393305"/>
    <lineage>
        <taxon>Bacteria</taxon>
        <taxon>Pseudomonadati</taxon>
        <taxon>Pseudomonadota</taxon>
        <taxon>Gammaproteobacteria</taxon>
        <taxon>Enterobacterales</taxon>
        <taxon>Yersiniaceae</taxon>
        <taxon>Yersinia</taxon>
    </lineage>
</organism>
<protein>
    <recommendedName>
        <fullName evidence="1">Elongation factor P-like protein</fullName>
    </recommendedName>
</protein>
<proteinExistence type="inferred from homology"/>
<accession>A1JLS4</accession>